<accession>A0A509AJL3</accession>
<comment type="function">
    <text evidence="1 2">Transcription factor which binds the 5'-[TC][AC]TG[AT]AC[AG]-3' motif (PubMed:35947628). During the mosquito vector stage, plays an essential role in the zygote for de novo transcription of genes required for ookinete formation (PubMed:34119684, PubMed:35947628).</text>
</comment>
<comment type="subcellular location">
    <subcellularLocation>
        <location evidence="1">Nucleus</location>
    </subcellularLocation>
    <subcellularLocation>
        <location evidence="2">Chromosome</location>
    </subcellularLocation>
</comment>
<comment type="developmental stage">
    <text evidence="1 2">Expressed in female gametocytes; however, translation is repressed by the DOZI complex and translation begins after fertilization with a peak expression at the zygote stage (PubMed:34119684, PubMed:35947628). Expressed in zygotes prior to apical protrusion formation (at protein level) (PubMed:35947628).</text>
</comment>
<comment type="domain">
    <text evidence="6">The AP2 domain contains a non-canonical linker peptide between the second and third sheets.</text>
</comment>
<comment type="disruption phenotype">
    <text evidence="1 2">Asexual blood stage is normal (PubMed:34119684). Female and male gametocytes are formed but fail to develop into mature ookinetes (PubMed:34119684). Zygote development is arrested at the ookinete retort stage; however, meiotic replication proceeds normally (PubMed:35947628). In the zygote, transcription of several genes is affected (PubMed:35947628). Infection of mosquitos with knockout parasites results in a lack of oocyst formation (PubMed:34119684).</text>
</comment>
<comment type="similarity">
    <text evidence="6">Belongs to the AP2/ERF transcription factor family. AP2 subfamily.</text>
</comment>
<organism evidence="8">
    <name type="scientific">Plasmodium berghei (strain Anka)</name>
    <dbReference type="NCBI Taxonomy" id="5823"/>
    <lineage>
        <taxon>Eukaryota</taxon>
        <taxon>Sar</taxon>
        <taxon>Alveolata</taxon>
        <taxon>Apicomplexa</taxon>
        <taxon>Aconoidasida</taxon>
        <taxon>Haemosporida</taxon>
        <taxon>Plasmodiidae</taxon>
        <taxon>Plasmodium</taxon>
        <taxon>Plasmodium (Vinckeia)</taxon>
    </lineage>
</organism>
<sequence>MNSKKIEELDKTTNHLDNSRNNMYSCTFMEKGDEDNILNSTILKMNNTEKGISFQTIEEEIKDKNKISNIPSDYAEKEKYCFNELLYTKQNGYINIIEKEDKPIQEILTDDKKNISEIDSSKSDKMDPCLSSQKVDEEYKYGDNYNINGDNPVHNSDEINEDSKCECSFFISKCDYEKDSDANTNGPKKSCKDSEENINYYNNNLLLGISENKDTLIKCDKIFERSYYSTSASTVLASNENEQNLQNISSYETVSSMNEKIKLDGNGKYEKLEKEQTYIMNKETNVINPQDYSIHDIGTYRDECISYLNKIKDIPHNIGSQINSYQNNNIIGNNNFKDKSYLIHENDFFDVETKKKNILQNYFLVNNNNEINANEDMNNRSDDLKNIEAVASDLNEIIEEDTIQKKINISKNCKIEENINMNINDHNKNAVFNFNINRQLFHDNQGDENMYKTNFNTENNKSINIINGMSKEVYEQNSGDIHAQVENINNIEQTTNNIIENNMMIIQGSDDLRFTTLNCINDNSNTDIMKCKRKIKNDENRENIMIKTDQKNIKMKDELDEDDKDELYGIPDKKRRKKNKKKKIPGRVYKVIVRGKECWRAEWLVQKNQENIEREKEESKMDRYSIMKLENTKDVDKNINKMNTPNFQKKSKQFSVSVYGYENARLFALFELIKYNSVPDSLKEEASICIHNIKRNIMNSENSSNKSFSGHFLQFLLADENNEYSSLLYKRLEDNVIQNVNKYSMHEMNNINRMNLFQTQGKEIGFRNEKYFTVQYDNENGHGNNIVDGTIWNIQNNERNLFYNNNNKCRNDYYYNNSNDIIKMKKENNEKLTTFNDNNFYNKANYINRYNNPYVSNNNPSIHNLNNLVYNINSYDFNPMHIRNGYGNDSNSTINISSPNSNYHRGFGEEKDIQKKKNFFNINNTRKYVGDINNKPMDGFKQNLFEKVLNNLENNMGNNNLYNYNSLEHHINSKVKSTYPYNNDNITNDPANTTTMISHGANNNQISNETEIRNSQQILHDNLLVYRNFMNPSSCDIGNVDKNSENDRGEKMASNFEGAFLNKSNIVFKQNANFDPFLGRNVSNINT</sequence>
<name>AP2Z_PLABA</name>
<keyword id="KW-0158">Chromosome</keyword>
<keyword id="KW-0238">DNA-binding</keyword>
<keyword id="KW-0539">Nucleus</keyword>
<keyword id="KW-1185">Reference proteome</keyword>
<keyword id="KW-0804">Transcription</keyword>
<keyword id="KW-0805">Transcription regulation</keyword>
<feature type="chain" id="PRO_0000457162" description="Transcription factor AP2-Z">
    <location>
        <begin position="1"/>
        <end position="1087"/>
    </location>
</feature>
<feature type="DNA-binding region" description="AP2" evidence="6">
    <location>
        <begin position="586"/>
        <end position="682"/>
    </location>
</feature>
<evidence type="ECO:0000269" key="1">
    <source>
    </source>
</evidence>
<evidence type="ECO:0000269" key="2">
    <source>
    </source>
</evidence>
<evidence type="ECO:0000303" key="3">
    <source>
    </source>
</evidence>
<evidence type="ECO:0000303" key="4">
    <source>
    </source>
</evidence>
<evidence type="ECO:0000305" key="5"/>
<evidence type="ECO:0000305" key="6">
    <source>
    </source>
</evidence>
<evidence type="ECO:0000312" key="7">
    <source>
        <dbReference type="EMBL" id="VUC54799.1"/>
    </source>
</evidence>
<evidence type="ECO:0000312" key="8">
    <source>
        <dbReference type="Proteomes" id="UP000074855"/>
    </source>
</evidence>
<dbReference type="EMBL" id="LK023121">
    <property type="protein sequence ID" value="VUC54799.1"/>
    <property type="molecule type" value="Genomic_DNA"/>
</dbReference>
<dbReference type="VEuPathDB" id="PlasmoDB:PBANKA_0612400"/>
<dbReference type="InParanoid" id="A0A509AJL3"/>
<dbReference type="OMA" id="EASICIH"/>
<dbReference type="Proteomes" id="UP000074855">
    <property type="component" value="Chromosome 6"/>
</dbReference>
<dbReference type="GO" id="GO:0005694">
    <property type="term" value="C:chromosome"/>
    <property type="evidence" value="ECO:0007669"/>
    <property type="project" value="UniProtKB-SubCell"/>
</dbReference>
<dbReference type="GO" id="GO:0005634">
    <property type="term" value="C:nucleus"/>
    <property type="evidence" value="ECO:0000314"/>
    <property type="project" value="UniProtKB"/>
</dbReference>
<dbReference type="GO" id="GO:0003677">
    <property type="term" value="F:DNA binding"/>
    <property type="evidence" value="ECO:0000314"/>
    <property type="project" value="UniProtKB"/>
</dbReference>
<dbReference type="GO" id="GO:0044114">
    <property type="term" value="P:development of symbiont in host"/>
    <property type="evidence" value="ECO:0000314"/>
    <property type="project" value="UniProtKB"/>
</dbReference>
<dbReference type="GO" id="GO:0006351">
    <property type="term" value="P:DNA-templated transcription"/>
    <property type="evidence" value="ECO:0000315"/>
    <property type="project" value="UniProtKB"/>
</dbReference>
<protein>
    <recommendedName>
        <fullName evidence="4">Transcription factor AP2-Z</fullName>
    </recommendedName>
    <alternativeName>
        <fullName evidence="3">AP2 transcription factor-related protein 1</fullName>
    </alternativeName>
</protein>
<proteinExistence type="evidence at protein level"/>
<gene>
    <name evidence="4" type="primary">ap2-z</name>
    <name evidence="3" type="synonym">ap2r-1</name>
    <name evidence="7" type="ORF">PBANKA_0612400</name>
</gene>
<reference evidence="8" key="1">
    <citation type="journal article" date="2014" name="BMC Biol.">
        <title>A comprehensive evaluation of rodent malaria parasite genomes and gene expression.</title>
        <authorList>
            <person name="Otto T.D."/>
            <person name="Bohme U."/>
            <person name="Jackson A.P."/>
            <person name="Hunt M."/>
            <person name="Franke-Fayard B."/>
            <person name="Hoeijmakers W.A."/>
            <person name="Religa A.A."/>
            <person name="Robertson L."/>
            <person name="Sanders M."/>
            <person name="Ogun S.A."/>
            <person name="Cunningham D."/>
            <person name="Erhart A."/>
            <person name="Billker O."/>
            <person name="Khan S.M."/>
            <person name="Stunnenberg H.G."/>
            <person name="Langhorne J."/>
            <person name="Holder A.A."/>
            <person name="Waters A.P."/>
            <person name="Newbold C.I."/>
            <person name="Pain A."/>
            <person name="Berriman M."/>
            <person name="Janse C.J."/>
        </authorList>
    </citation>
    <scope>NUCLEOTIDE SEQUENCE [LARGE SCALE GENOMIC DNA]</scope>
    <source>
        <strain evidence="8">ANKA</strain>
    </source>
</reference>
<reference evidence="5" key="2">
    <citation type="journal article" date="2021" name="Parasitol. Int.">
        <title>Mechanisms of triggering malaria gametocytogenesis by AP2-G.</title>
        <authorList>
            <person name="Yuda M."/>
            <person name="Kaneko I."/>
            <person name="Murata Y."/>
            <person name="Iwanaga S."/>
            <person name="Nishi T."/>
        </authorList>
    </citation>
    <scope>FUNCTION</scope>
    <scope>SUBCELLULAR LOCATION</scope>
    <scope>DEVELOPMENTAL STAGE</scope>
    <scope>DISRUPTION PHENOTYPE</scope>
</reference>
<reference evidence="5" key="3">
    <citation type="journal article" date="2022" name="PLoS Pathog.">
        <title>Identification of a novel AP2 transcription factor in zygotes with an essential role in Plasmodium ookinete development.</title>
        <authorList>
            <person name="Nishi T."/>
            <person name="Kaneko I."/>
            <person name="Iwanaga S."/>
            <person name="Yuda M."/>
        </authorList>
    </citation>
    <scope>FUNCTION</scope>
    <scope>SUBCELLULAR LOCATION</scope>
    <scope>DEVELOPMENTAL STAGE</scope>
    <scope>DOMAIN</scope>
    <scope>DISRUPTION PHENOTYPE</scope>
</reference>